<dbReference type="EMBL" id="U59239">
    <property type="protein sequence ID" value="AAA86849.1"/>
    <property type="molecule type" value="Genomic_DNA"/>
</dbReference>
<dbReference type="RefSeq" id="NP_941152.1">
    <property type="nucleotide sequence ID" value="NC_005211.1"/>
</dbReference>
<dbReference type="RefSeq" id="WP_000255079.1">
    <property type="nucleotide sequence ID" value="NZ_VOMJ01000014.1"/>
</dbReference>
<dbReference type="GeneID" id="93248006"/>
<dbReference type="GO" id="GO:0005886">
    <property type="term" value="C:plasma membrane"/>
    <property type="evidence" value="ECO:0007669"/>
    <property type="project" value="UniProtKB-SubCell"/>
</dbReference>
<dbReference type="GO" id="GO:0046690">
    <property type="term" value="P:response to tellurium ion"/>
    <property type="evidence" value="ECO:0007669"/>
    <property type="project" value="UniProtKB-KW"/>
</dbReference>
<dbReference type="InterPro" id="IPR005496">
    <property type="entry name" value="Integral_membrane_TerC"/>
</dbReference>
<dbReference type="InterPro" id="IPR022369">
    <property type="entry name" value="Integral_membrane_TerC_rswitch"/>
</dbReference>
<dbReference type="NCBIfam" id="TIGR03718">
    <property type="entry name" value="R_switched_Alx"/>
    <property type="match status" value="1"/>
</dbReference>
<dbReference type="PANTHER" id="PTHR30238">
    <property type="entry name" value="MEMBRANE BOUND PREDICTED REDOX MODULATOR"/>
    <property type="match status" value="1"/>
</dbReference>
<dbReference type="PANTHER" id="PTHR30238:SF0">
    <property type="entry name" value="THYLAKOID MEMBRANE PROTEIN TERC, CHLOROPLASTIC"/>
    <property type="match status" value="1"/>
</dbReference>
<dbReference type="Pfam" id="PF03741">
    <property type="entry name" value="TerC"/>
    <property type="match status" value="1"/>
</dbReference>
<name>TERC_SERMA</name>
<keyword id="KW-1003">Cell membrane</keyword>
<keyword id="KW-0472">Membrane</keyword>
<keyword id="KW-0614">Plasmid</keyword>
<keyword id="KW-0778">Tellurium resistance</keyword>
<keyword id="KW-0812">Transmembrane</keyword>
<keyword id="KW-1133">Transmembrane helix</keyword>
<accession>Q52356</accession>
<geneLocation type="plasmid">
    <name>IncHI2 R478</name>
</geneLocation>
<proteinExistence type="inferred from homology"/>
<gene>
    <name type="primary">terC</name>
</gene>
<sequence length="346" mass="38393">MVSTHIGFPTETVIVFIALSVGAIFIDLFMHRDDKPISLKSAALWSVFWVVVAMAFAGFLYIHHGAEVASLFVTGYALEKVLSVDNLFVMMAIFSWFAVPDRYRHRVLYWGIIGAIVFRGIFVAIGTSLLSLGPYVEVVFAIIVAWTAVMMLKSGDDDDEIEDYSQHLAYRMVKRFFPIWPKLRGHAFLLNQKEVDAELAKPENSDVTIGRGKKAALYATPLFLCVAVVELSDVMFAFDSVPAIIAVSREPLIVYSAMMFAILGLRTLYFVLEALKQYLVHLEKAVIVLLFFIAAKLGLNATDHIWHHGYSIAATTSLYVVLGVLALGILASVMFPGKPESEEKGS</sequence>
<evidence type="ECO:0000255" key="1"/>
<evidence type="ECO:0000305" key="2"/>
<feature type="chain" id="PRO_0000103409" description="Tellurium resistance protein TerC">
    <location>
        <begin position="1"/>
        <end position="346"/>
    </location>
</feature>
<feature type="transmembrane region" description="Helical" evidence="1">
    <location>
        <begin position="6"/>
        <end position="26"/>
    </location>
</feature>
<feature type="transmembrane region" description="Helical" evidence="1">
    <location>
        <begin position="42"/>
        <end position="62"/>
    </location>
</feature>
<feature type="transmembrane region" description="Helical" evidence="1">
    <location>
        <begin position="81"/>
        <end position="101"/>
    </location>
</feature>
<feature type="transmembrane region" description="Helical" evidence="1">
    <location>
        <begin position="110"/>
        <end position="130"/>
    </location>
</feature>
<feature type="transmembrane region" description="Helical" evidence="1">
    <location>
        <begin position="132"/>
        <end position="152"/>
    </location>
</feature>
<feature type="transmembrane region" description="Helical" evidence="1">
    <location>
        <begin position="227"/>
        <end position="247"/>
    </location>
</feature>
<feature type="transmembrane region" description="Helical" evidence="1">
    <location>
        <begin position="252"/>
        <end position="272"/>
    </location>
</feature>
<feature type="transmembrane region" description="Helical" evidence="1">
    <location>
        <begin position="286"/>
        <end position="306"/>
    </location>
</feature>
<feature type="transmembrane region" description="Helical" evidence="1">
    <location>
        <begin position="316"/>
        <end position="336"/>
    </location>
</feature>
<protein>
    <recommendedName>
        <fullName>Tellurium resistance protein TerC</fullName>
    </recommendedName>
</protein>
<reference key="1">
    <citation type="journal article" date="1995" name="J. Bacteriol.">
        <title>Phage inhibition, colicin resistance, and tellurite resistance are encoded by a single cluster of genes on the IncHI2 plasmid R478.</title>
        <authorList>
            <person name="Whelan K.F."/>
            <person name="Colleran E."/>
            <person name="Taylor D.E."/>
        </authorList>
    </citation>
    <scope>NUCLEOTIDE SEQUENCE [GENOMIC DNA]</scope>
</reference>
<organism>
    <name type="scientific">Serratia marcescens</name>
    <dbReference type="NCBI Taxonomy" id="615"/>
    <lineage>
        <taxon>Bacteria</taxon>
        <taxon>Pseudomonadati</taxon>
        <taxon>Pseudomonadota</taxon>
        <taxon>Gammaproteobacteria</taxon>
        <taxon>Enterobacterales</taxon>
        <taxon>Yersiniaceae</taxon>
        <taxon>Serratia</taxon>
    </lineage>
</organism>
<comment type="function">
    <text>Could conceivably alter the intracellular level of tellurium in a manner leading to resistance. Alternatively its presence in the membrane may provide a barrier to entry of the tellurium ions.</text>
</comment>
<comment type="subcellular location">
    <subcellularLocation>
        <location>Cell membrane</location>
        <topology>Multi-pass membrane protein</topology>
    </subcellularLocation>
</comment>
<comment type="similarity">
    <text evidence="2">Belongs to the TerC family.</text>
</comment>